<name>MPC1_RAT</name>
<dbReference type="EMBL" id="AF304429">
    <property type="protein sequence ID" value="AAG24885.1"/>
    <property type="molecule type" value="mRNA"/>
</dbReference>
<dbReference type="EMBL" id="BC097287">
    <property type="protein sequence ID" value="AAH97287.1"/>
    <property type="molecule type" value="mRNA"/>
</dbReference>
<dbReference type="RefSeq" id="NP_598245.1">
    <property type="nucleotide sequence ID" value="NM_133561.2"/>
</dbReference>
<dbReference type="RefSeq" id="XP_063130166.1">
    <property type="nucleotide sequence ID" value="XM_063274096.1"/>
</dbReference>
<dbReference type="SMR" id="P63031"/>
<dbReference type="FunCoup" id="P63031">
    <property type="interactions" value="1900"/>
</dbReference>
<dbReference type="STRING" id="10116.ENSRNOP00000017282"/>
<dbReference type="GuidetoPHARMACOLOGY" id="3022"/>
<dbReference type="iPTMnet" id="P63031"/>
<dbReference type="PhosphoSitePlus" id="P63031"/>
<dbReference type="SwissPalm" id="P63031"/>
<dbReference type="PaxDb" id="10116-ENSRNOP00000017282"/>
<dbReference type="GeneID" id="171087"/>
<dbReference type="KEGG" id="rno:171087"/>
<dbReference type="AGR" id="RGD:620902"/>
<dbReference type="CTD" id="51660"/>
<dbReference type="RGD" id="620902">
    <property type="gene designation" value="Mpc1"/>
</dbReference>
<dbReference type="VEuPathDB" id="HostDB:ENSRNOG00000012415"/>
<dbReference type="eggNOG" id="KOG1590">
    <property type="taxonomic scope" value="Eukaryota"/>
</dbReference>
<dbReference type="HOGENOM" id="CLU_099502_3_2_1"/>
<dbReference type="InParanoid" id="P63031"/>
<dbReference type="OrthoDB" id="1726at9989"/>
<dbReference type="PhylomeDB" id="P63031"/>
<dbReference type="PRO" id="PR:P63031"/>
<dbReference type="Proteomes" id="UP000002494">
    <property type="component" value="Chromosome 1"/>
</dbReference>
<dbReference type="Bgee" id="ENSRNOG00000012415">
    <property type="expression patterns" value="Expressed in heart and 20 other cell types or tissues"/>
</dbReference>
<dbReference type="GO" id="GO:0005743">
    <property type="term" value="C:mitochondrial inner membrane"/>
    <property type="evidence" value="ECO:0000250"/>
    <property type="project" value="UniProtKB"/>
</dbReference>
<dbReference type="GO" id="GO:0050833">
    <property type="term" value="F:pyruvate transmembrane transporter activity"/>
    <property type="evidence" value="ECO:0000266"/>
    <property type="project" value="RGD"/>
</dbReference>
<dbReference type="GO" id="GO:1990830">
    <property type="term" value="P:cellular response to leukemia inhibitory factor"/>
    <property type="evidence" value="ECO:0000266"/>
    <property type="project" value="RGD"/>
</dbReference>
<dbReference type="GO" id="GO:0006850">
    <property type="term" value="P:mitochondrial pyruvate transmembrane transport"/>
    <property type="evidence" value="ECO:0000250"/>
    <property type="project" value="UniProtKB"/>
</dbReference>
<dbReference type="GO" id="GO:0006086">
    <property type="term" value="P:pyruvate decarboxylation to acetyl-CoA"/>
    <property type="evidence" value="ECO:0000266"/>
    <property type="project" value="RGD"/>
</dbReference>
<dbReference type="InterPro" id="IPR005336">
    <property type="entry name" value="MPC"/>
</dbReference>
<dbReference type="PANTHER" id="PTHR14154">
    <property type="entry name" value="UPF0041 BRAIN PROTEIN 44-RELATED"/>
    <property type="match status" value="1"/>
</dbReference>
<dbReference type="Pfam" id="PF03650">
    <property type="entry name" value="MPC"/>
    <property type="match status" value="1"/>
</dbReference>
<proteinExistence type="inferred from homology"/>
<protein>
    <recommendedName>
        <fullName>Mitochondrial pyruvate carrier 1</fullName>
    </recommendedName>
    <alternativeName>
        <fullName>Apoptosis-regulating basic protein</fullName>
    </alternativeName>
    <alternativeName>
        <fullName>Brain protein 44-like protein</fullName>
    </alternativeName>
</protein>
<evidence type="ECO:0000250" key="1">
    <source>
        <dbReference type="UniProtKB" id="P63030"/>
    </source>
</evidence>
<evidence type="ECO:0000250" key="2">
    <source>
        <dbReference type="UniProtKB" id="Q3ZCG2"/>
    </source>
</evidence>
<evidence type="ECO:0000250" key="3">
    <source>
        <dbReference type="UniProtKB" id="Q9Y5U8"/>
    </source>
</evidence>
<evidence type="ECO:0000255" key="4"/>
<evidence type="ECO:0000305" key="5"/>
<comment type="function">
    <text evidence="3">Mediates the uptake of pyruvate into mitochondria.</text>
</comment>
<comment type="catalytic activity">
    <reaction evidence="3">
        <text>pyruvate(out) + H(+)(out) = pyruvate(in) + H(+)(in)</text>
        <dbReference type="Rhea" id="RHEA:64720"/>
        <dbReference type="ChEBI" id="CHEBI:15361"/>
        <dbReference type="ChEBI" id="CHEBI:15378"/>
    </reaction>
</comment>
<comment type="subunit">
    <text evidence="3">Homodimer. Forms heterodimer with MPC2. The heterodimer is the more stable and dominant form.</text>
</comment>
<comment type="subcellular location">
    <subcellularLocation>
        <location evidence="3">Mitochondrion inner membrane</location>
        <topology evidence="4">Multi-pass membrane protein</topology>
    </subcellularLocation>
</comment>
<comment type="similarity">
    <text evidence="5">Belongs to the mitochondrial pyruvate carrier (MPC) (TC 2.A.105) family.</text>
</comment>
<accession>P63031</accession>
<accession>Q4V8N5</accession>
<accession>Q9D6C0</accession>
<accession>Q9JLG5</accession>
<feature type="initiator methionine" description="Removed" evidence="2">
    <location>
        <position position="1"/>
    </location>
</feature>
<feature type="chain" id="PRO_0000212799" description="Mitochondrial pyruvate carrier 1">
    <location>
        <begin position="2"/>
        <end position="109"/>
    </location>
</feature>
<feature type="topological domain" description="Mitochondrial matrix" evidence="3">
    <location>
        <begin position="2"/>
        <end position="20"/>
    </location>
</feature>
<feature type="transmembrane region" description="Helical" evidence="4">
    <location>
        <begin position="21"/>
        <end position="41"/>
    </location>
</feature>
<feature type="topological domain" description="Mitochondrial intermembrane" evidence="3">
    <location>
        <begin position="42"/>
        <end position="52"/>
    </location>
</feature>
<feature type="transmembrane region" description="Helical" evidence="4">
    <location>
        <begin position="53"/>
        <end position="71"/>
    </location>
</feature>
<feature type="topological domain" description="Mitochondrial matrix" evidence="3">
    <location>
        <begin position="72"/>
        <end position="109"/>
    </location>
</feature>
<feature type="modified residue" description="N-acetylalanine" evidence="2">
    <location>
        <position position="2"/>
    </location>
</feature>
<feature type="modified residue" description="N6-acetyllysine" evidence="1">
    <location>
        <position position="72"/>
    </location>
</feature>
<gene>
    <name type="primary">Mpc1</name>
    <name type="synonym">Arbp</name>
    <name type="synonym">Brp44l</name>
</gene>
<reference key="1">
    <citation type="submission" date="2000-09" db="EMBL/GenBank/DDBJ databases">
        <title>A protein involved in apoptosis of rat neuronal cell.</title>
        <authorList>
            <person name="Dong B."/>
            <person name="Hong M."/>
            <person name="Dongbing L."/>
            <person name="Jijie G."/>
            <person name="Bingren H."/>
        </authorList>
    </citation>
    <scope>NUCLEOTIDE SEQUENCE [MRNA]</scope>
    <source>
        <tissue>Neuron</tissue>
    </source>
</reference>
<reference key="2">
    <citation type="journal article" date="2004" name="Genome Res.">
        <title>The status, quality, and expansion of the NIH full-length cDNA project: the Mammalian Gene Collection (MGC).</title>
        <authorList>
            <consortium name="The MGC Project Team"/>
        </authorList>
    </citation>
    <scope>NUCLEOTIDE SEQUENCE [LARGE SCALE MRNA]</scope>
    <source>
        <tissue>Placenta</tissue>
    </source>
</reference>
<keyword id="KW-0007">Acetylation</keyword>
<keyword id="KW-0472">Membrane</keyword>
<keyword id="KW-0496">Mitochondrion</keyword>
<keyword id="KW-0999">Mitochondrion inner membrane</keyword>
<keyword id="KW-1185">Reference proteome</keyword>
<keyword id="KW-0812">Transmembrane</keyword>
<keyword id="KW-1133">Transmembrane helix</keyword>
<keyword id="KW-0813">Transport</keyword>
<organism>
    <name type="scientific">Rattus norvegicus</name>
    <name type="common">Rat</name>
    <dbReference type="NCBI Taxonomy" id="10116"/>
    <lineage>
        <taxon>Eukaryota</taxon>
        <taxon>Metazoa</taxon>
        <taxon>Chordata</taxon>
        <taxon>Craniata</taxon>
        <taxon>Vertebrata</taxon>
        <taxon>Euteleostomi</taxon>
        <taxon>Mammalia</taxon>
        <taxon>Eutheria</taxon>
        <taxon>Euarchontoglires</taxon>
        <taxon>Glires</taxon>
        <taxon>Rodentia</taxon>
        <taxon>Myomorpha</taxon>
        <taxon>Muroidea</taxon>
        <taxon>Muridae</taxon>
        <taxon>Murinae</taxon>
        <taxon>Rattus</taxon>
    </lineage>
</organism>
<sequence length="109" mass="12455">MAGALVRKAADYVRSKDFRDYLMSTHFWGPVANWGLPIAAINDMKKSPEIISGRMTFALCCYSLTFMRFAYKVQPRNWLLFACHVTNEVAQLIQGGRLINYEMSKRPSA</sequence>